<protein>
    <recommendedName>
        <fullName>Uncharacterized transporter sll1319</fullName>
    </recommendedName>
</protein>
<proteinExistence type="inferred from homology"/>
<organism>
    <name type="scientific">Synechocystis sp. (strain ATCC 27184 / PCC 6803 / Kazusa)</name>
    <dbReference type="NCBI Taxonomy" id="1111708"/>
    <lineage>
        <taxon>Bacteria</taxon>
        <taxon>Bacillati</taxon>
        <taxon>Cyanobacteriota</taxon>
        <taxon>Cyanophyceae</taxon>
        <taxon>Synechococcales</taxon>
        <taxon>Merismopediaceae</taxon>
        <taxon>Synechocystis</taxon>
    </lineage>
</organism>
<comment type="subcellular location">
    <subcellularLocation>
        <location evidence="2">Cell membrane</location>
        <topology evidence="2">Multi-pass membrane protein</topology>
    </subcellularLocation>
</comment>
<comment type="similarity">
    <text evidence="2">Belongs to the EamA transporter family.</text>
</comment>
<reference key="1">
    <citation type="journal article" date="1996" name="DNA Res.">
        <title>Sequence analysis of the genome of the unicellular cyanobacterium Synechocystis sp. strain PCC6803. II. Sequence determination of the entire genome and assignment of potential protein-coding regions.</title>
        <authorList>
            <person name="Kaneko T."/>
            <person name="Sato S."/>
            <person name="Kotani H."/>
            <person name="Tanaka A."/>
            <person name="Asamizu E."/>
            <person name="Nakamura Y."/>
            <person name="Miyajima N."/>
            <person name="Hirosawa M."/>
            <person name="Sugiura M."/>
            <person name="Sasamoto S."/>
            <person name="Kimura T."/>
            <person name="Hosouchi T."/>
            <person name="Matsuno A."/>
            <person name="Muraki A."/>
            <person name="Nakazaki N."/>
            <person name="Naruo K."/>
            <person name="Okumura S."/>
            <person name="Shimpo S."/>
            <person name="Takeuchi C."/>
            <person name="Wada T."/>
            <person name="Watanabe A."/>
            <person name="Yamada M."/>
            <person name="Yasuda M."/>
            <person name="Tabata S."/>
        </authorList>
    </citation>
    <scope>NUCLEOTIDE SEQUENCE [LARGE SCALE GENOMIC DNA]</scope>
    <source>
        <strain>ATCC 27184 / PCC 6803 / Kazusa</strain>
    </source>
</reference>
<sequence length="329" mass="36454">MRILSNVNLMGLLIVLLAAIFFCFHNVIVRILYSQQNILGIWQVGGFVTPTLSHSFLLLLLRMLWVVPLMALISQRLYGNTWREINQLKQPVNRPVIWEAMGCGFLMFLYLVLLYISISFIPTGIAITLFFTYPIFTALLAWRLFNDVPSLLRWLVIGLTLIGTFLTIPYAYGGEQQTLVLGVSTGIASGIVYAGYTVFAQRSFQRLHPVPFTWISFATTLILSILCLIIWQPHEGNLPWLAITIGSLLSALFTLAGHVLNNWGIHLIGASRAAIIGATNPALTVVLAGLAIQESLTNIQIFGVCLVTFSIALLNYEKVSPSTGKNSLK</sequence>
<gene>
    <name type="ordered locus">sll1319</name>
</gene>
<name>Y1319_SYNY3</name>
<feature type="chain" id="PRO_0000108197" description="Uncharacterized transporter sll1319">
    <location>
        <begin position="1"/>
        <end position="329"/>
    </location>
</feature>
<feature type="transmembrane region" description="Helical" evidence="1">
    <location>
        <begin position="9"/>
        <end position="29"/>
    </location>
</feature>
<feature type="transmembrane region" description="Helical" evidence="1">
    <location>
        <begin position="53"/>
        <end position="73"/>
    </location>
</feature>
<feature type="transmembrane region" description="Helical" evidence="1">
    <location>
        <begin position="105"/>
        <end position="125"/>
    </location>
</feature>
<feature type="transmembrane region" description="Helical" evidence="1">
    <location>
        <begin position="126"/>
        <end position="146"/>
    </location>
</feature>
<feature type="transmembrane region" description="Helical" evidence="1">
    <location>
        <begin position="154"/>
        <end position="174"/>
    </location>
</feature>
<feature type="transmembrane region" description="Helical" evidence="1">
    <location>
        <begin position="179"/>
        <end position="199"/>
    </location>
</feature>
<feature type="transmembrane region" description="Helical" evidence="1">
    <location>
        <begin position="210"/>
        <end position="230"/>
    </location>
</feature>
<feature type="transmembrane region" description="Helical" evidence="1">
    <location>
        <begin position="240"/>
        <end position="260"/>
    </location>
</feature>
<feature type="transmembrane region" description="Helical" evidence="1">
    <location>
        <begin position="273"/>
        <end position="293"/>
    </location>
</feature>
<feature type="transmembrane region" description="Helical" evidence="1">
    <location>
        <begin position="296"/>
        <end position="316"/>
    </location>
</feature>
<feature type="domain" description="EamA 1">
    <location>
        <begin position="103"/>
        <end position="169"/>
    </location>
</feature>
<feature type="domain" description="EamA 2">
    <location>
        <begin position="191"/>
        <end position="316"/>
    </location>
</feature>
<accession>P72732</accession>
<keyword id="KW-1003">Cell membrane</keyword>
<keyword id="KW-0472">Membrane</keyword>
<keyword id="KW-1185">Reference proteome</keyword>
<keyword id="KW-0677">Repeat</keyword>
<keyword id="KW-0812">Transmembrane</keyword>
<keyword id="KW-1133">Transmembrane helix</keyword>
<keyword id="KW-0813">Transport</keyword>
<dbReference type="EMBL" id="BA000022">
    <property type="protein sequence ID" value="BAA16747.1"/>
    <property type="molecule type" value="Genomic_DNA"/>
</dbReference>
<dbReference type="PIR" id="S74595">
    <property type="entry name" value="S74595"/>
</dbReference>
<dbReference type="SMR" id="P72732"/>
<dbReference type="FunCoup" id="P72732">
    <property type="interactions" value="9"/>
</dbReference>
<dbReference type="STRING" id="1148.gene:10497602"/>
<dbReference type="PaxDb" id="1148-1651820"/>
<dbReference type="EnsemblBacteria" id="BAA16747">
    <property type="protein sequence ID" value="BAA16747"/>
    <property type="gene ID" value="BAA16747"/>
</dbReference>
<dbReference type="KEGG" id="syn:sll1319"/>
<dbReference type="eggNOG" id="COG0697">
    <property type="taxonomic scope" value="Bacteria"/>
</dbReference>
<dbReference type="InParanoid" id="P72732"/>
<dbReference type="PhylomeDB" id="P72732"/>
<dbReference type="Proteomes" id="UP000001425">
    <property type="component" value="Chromosome"/>
</dbReference>
<dbReference type="GO" id="GO:0016020">
    <property type="term" value="C:membrane"/>
    <property type="evidence" value="ECO:0000318"/>
    <property type="project" value="GO_Central"/>
</dbReference>
<dbReference type="GO" id="GO:0005886">
    <property type="term" value="C:plasma membrane"/>
    <property type="evidence" value="ECO:0007669"/>
    <property type="project" value="UniProtKB-SubCell"/>
</dbReference>
<dbReference type="Gene3D" id="1.10.3730.20">
    <property type="match status" value="1"/>
</dbReference>
<dbReference type="InterPro" id="IPR000620">
    <property type="entry name" value="EamA_dom"/>
</dbReference>
<dbReference type="PANTHER" id="PTHR22911">
    <property type="entry name" value="ACYL-MALONYL CONDENSING ENZYME-RELATED"/>
    <property type="match status" value="1"/>
</dbReference>
<dbReference type="PANTHER" id="PTHR22911:SF137">
    <property type="entry name" value="SOLUTE CARRIER FAMILY 35 MEMBER G2-RELATED"/>
    <property type="match status" value="1"/>
</dbReference>
<dbReference type="Pfam" id="PF00892">
    <property type="entry name" value="EamA"/>
    <property type="match status" value="1"/>
</dbReference>
<dbReference type="SUPFAM" id="SSF103481">
    <property type="entry name" value="Multidrug resistance efflux transporter EmrE"/>
    <property type="match status" value="2"/>
</dbReference>
<evidence type="ECO:0000255" key="1"/>
<evidence type="ECO:0000305" key="2"/>